<gene>
    <name evidence="1" type="primary">rplP</name>
    <name type="ordered locus">RAF_ORF0905</name>
</gene>
<name>RL16_RICAE</name>
<comment type="function">
    <text evidence="1">Binds 23S rRNA and is also seen to make contacts with the A and possibly P site tRNAs.</text>
</comment>
<comment type="subunit">
    <text evidence="1">Part of the 50S ribosomal subunit.</text>
</comment>
<comment type="similarity">
    <text evidence="1">Belongs to the universal ribosomal protein uL16 family.</text>
</comment>
<reference key="1">
    <citation type="journal article" date="2009" name="BMC Genomics">
        <title>Analysis of the Rickettsia africae genome reveals that virulence acquisition in Rickettsia species may be explained by genome reduction.</title>
        <authorList>
            <person name="Fournier P.-E."/>
            <person name="El Karkouri K."/>
            <person name="Leroy Q."/>
            <person name="Robert C."/>
            <person name="Giumelli B."/>
            <person name="Renesto P."/>
            <person name="Socolovschi C."/>
            <person name="Parola P."/>
            <person name="Audic S."/>
            <person name="Raoult D."/>
        </authorList>
    </citation>
    <scope>NUCLEOTIDE SEQUENCE [LARGE SCALE GENOMIC DNA]</scope>
    <source>
        <strain>ESF-5</strain>
    </source>
</reference>
<proteinExistence type="inferred from homology"/>
<keyword id="KW-0687">Ribonucleoprotein</keyword>
<keyword id="KW-0689">Ribosomal protein</keyword>
<keyword id="KW-0694">RNA-binding</keyword>
<keyword id="KW-0699">rRNA-binding</keyword>
<keyword id="KW-0820">tRNA-binding</keyword>
<dbReference type="EMBL" id="CP001612">
    <property type="protein sequence ID" value="ACP53760.1"/>
    <property type="molecule type" value="Genomic_DNA"/>
</dbReference>
<dbReference type="RefSeq" id="WP_012719918.1">
    <property type="nucleotide sequence ID" value="NC_012633.1"/>
</dbReference>
<dbReference type="SMR" id="C3PPA0"/>
<dbReference type="KEGG" id="raf:RAF_ORF0905"/>
<dbReference type="HOGENOM" id="CLU_078858_2_1_5"/>
<dbReference type="Proteomes" id="UP000002305">
    <property type="component" value="Chromosome"/>
</dbReference>
<dbReference type="GO" id="GO:0022625">
    <property type="term" value="C:cytosolic large ribosomal subunit"/>
    <property type="evidence" value="ECO:0007669"/>
    <property type="project" value="TreeGrafter"/>
</dbReference>
<dbReference type="GO" id="GO:0019843">
    <property type="term" value="F:rRNA binding"/>
    <property type="evidence" value="ECO:0007669"/>
    <property type="project" value="UniProtKB-UniRule"/>
</dbReference>
<dbReference type="GO" id="GO:0003735">
    <property type="term" value="F:structural constituent of ribosome"/>
    <property type="evidence" value="ECO:0007669"/>
    <property type="project" value="InterPro"/>
</dbReference>
<dbReference type="GO" id="GO:0000049">
    <property type="term" value="F:tRNA binding"/>
    <property type="evidence" value="ECO:0007669"/>
    <property type="project" value="UniProtKB-KW"/>
</dbReference>
<dbReference type="GO" id="GO:0006412">
    <property type="term" value="P:translation"/>
    <property type="evidence" value="ECO:0007669"/>
    <property type="project" value="UniProtKB-UniRule"/>
</dbReference>
<dbReference type="CDD" id="cd01433">
    <property type="entry name" value="Ribosomal_L16_L10e"/>
    <property type="match status" value="1"/>
</dbReference>
<dbReference type="FunFam" id="3.90.1170.10:FF:000001">
    <property type="entry name" value="50S ribosomal protein L16"/>
    <property type="match status" value="1"/>
</dbReference>
<dbReference type="Gene3D" id="3.90.1170.10">
    <property type="entry name" value="Ribosomal protein L10e/L16"/>
    <property type="match status" value="1"/>
</dbReference>
<dbReference type="HAMAP" id="MF_01342">
    <property type="entry name" value="Ribosomal_uL16"/>
    <property type="match status" value="1"/>
</dbReference>
<dbReference type="InterPro" id="IPR047873">
    <property type="entry name" value="Ribosomal_uL16"/>
</dbReference>
<dbReference type="InterPro" id="IPR000114">
    <property type="entry name" value="Ribosomal_uL16_bact-type"/>
</dbReference>
<dbReference type="InterPro" id="IPR020798">
    <property type="entry name" value="Ribosomal_uL16_CS"/>
</dbReference>
<dbReference type="InterPro" id="IPR016180">
    <property type="entry name" value="Ribosomal_uL16_dom"/>
</dbReference>
<dbReference type="InterPro" id="IPR036920">
    <property type="entry name" value="Ribosomal_uL16_sf"/>
</dbReference>
<dbReference type="NCBIfam" id="TIGR01164">
    <property type="entry name" value="rplP_bact"/>
    <property type="match status" value="1"/>
</dbReference>
<dbReference type="PANTHER" id="PTHR12220">
    <property type="entry name" value="50S/60S RIBOSOMAL PROTEIN L16"/>
    <property type="match status" value="1"/>
</dbReference>
<dbReference type="PANTHER" id="PTHR12220:SF13">
    <property type="entry name" value="LARGE RIBOSOMAL SUBUNIT PROTEIN UL16M"/>
    <property type="match status" value="1"/>
</dbReference>
<dbReference type="Pfam" id="PF00252">
    <property type="entry name" value="Ribosomal_L16"/>
    <property type="match status" value="1"/>
</dbReference>
<dbReference type="PRINTS" id="PR00060">
    <property type="entry name" value="RIBOSOMALL16"/>
</dbReference>
<dbReference type="SUPFAM" id="SSF54686">
    <property type="entry name" value="Ribosomal protein L16p/L10e"/>
    <property type="match status" value="1"/>
</dbReference>
<dbReference type="PROSITE" id="PS00586">
    <property type="entry name" value="RIBOSOMAL_L16_1"/>
    <property type="match status" value="1"/>
</dbReference>
<dbReference type="PROSITE" id="PS00701">
    <property type="entry name" value="RIBOSOMAL_L16_2"/>
    <property type="match status" value="1"/>
</dbReference>
<protein>
    <recommendedName>
        <fullName evidence="1">Large ribosomal subunit protein uL16</fullName>
    </recommendedName>
    <alternativeName>
        <fullName evidence="2">50S ribosomal protein L16</fullName>
    </alternativeName>
</protein>
<feature type="chain" id="PRO_1000214743" description="Large ribosomal subunit protein uL16">
    <location>
        <begin position="1"/>
        <end position="136"/>
    </location>
</feature>
<evidence type="ECO:0000255" key="1">
    <source>
        <dbReference type="HAMAP-Rule" id="MF_01342"/>
    </source>
</evidence>
<evidence type="ECO:0000305" key="2"/>
<sequence length="136" mass="15235">MLAPKKQKFRKAHKGRVASIAKAGTTLAFGSFGLKSIDGWRVTARQIEAGRKAATRCMKRQGRLWIRIFPDVPVSKKPAEVRMGKGKGSPEFFAVRVSPGRIMFEIEGVEENVALRALELVSAKLPVRTRIVRRYE</sequence>
<organism>
    <name type="scientific">Rickettsia africae (strain ESF-5)</name>
    <dbReference type="NCBI Taxonomy" id="347255"/>
    <lineage>
        <taxon>Bacteria</taxon>
        <taxon>Pseudomonadati</taxon>
        <taxon>Pseudomonadota</taxon>
        <taxon>Alphaproteobacteria</taxon>
        <taxon>Rickettsiales</taxon>
        <taxon>Rickettsiaceae</taxon>
        <taxon>Rickettsieae</taxon>
        <taxon>Rickettsia</taxon>
        <taxon>spotted fever group</taxon>
    </lineage>
</organism>
<accession>C3PPA0</accession>